<feature type="chain" id="PRO_0000336439" description="Thiamine-phosphate synthase">
    <location>
        <begin position="1"/>
        <end position="214"/>
    </location>
</feature>
<feature type="binding site" evidence="1">
    <location>
        <begin position="37"/>
        <end position="41"/>
    </location>
    <ligand>
        <name>4-amino-2-methyl-5-(diphosphooxymethyl)pyrimidine</name>
        <dbReference type="ChEBI" id="CHEBI:57841"/>
    </ligand>
</feature>
<feature type="binding site" evidence="1">
    <location>
        <position position="69"/>
    </location>
    <ligand>
        <name>4-amino-2-methyl-5-(diphosphooxymethyl)pyrimidine</name>
        <dbReference type="ChEBI" id="CHEBI:57841"/>
    </ligand>
</feature>
<feature type="binding site" evidence="1">
    <location>
        <position position="70"/>
    </location>
    <ligand>
        <name>Mg(2+)</name>
        <dbReference type="ChEBI" id="CHEBI:18420"/>
    </ligand>
</feature>
<feature type="binding site" evidence="1">
    <location>
        <position position="89"/>
    </location>
    <ligand>
        <name>Mg(2+)</name>
        <dbReference type="ChEBI" id="CHEBI:18420"/>
    </ligand>
</feature>
<feature type="binding site" evidence="1">
    <location>
        <position position="108"/>
    </location>
    <ligand>
        <name>4-amino-2-methyl-5-(diphosphooxymethyl)pyrimidine</name>
        <dbReference type="ChEBI" id="CHEBI:57841"/>
    </ligand>
</feature>
<feature type="binding site" evidence="1">
    <location>
        <begin position="134"/>
        <end position="136"/>
    </location>
    <ligand>
        <name>2-[(2R,5Z)-2-carboxy-4-methylthiazol-5(2H)-ylidene]ethyl phosphate</name>
        <dbReference type="ChEBI" id="CHEBI:62899"/>
    </ligand>
</feature>
<feature type="binding site" evidence="1">
    <location>
        <position position="137"/>
    </location>
    <ligand>
        <name>4-amino-2-methyl-5-(diphosphooxymethyl)pyrimidine</name>
        <dbReference type="ChEBI" id="CHEBI:57841"/>
    </ligand>
</feature>
<feature type="binding site" evidence="1">
    <location>
        <position position="167"/>
    </location>
    <ligand>
        <name>2-[(2R,5Z)-2-carboxy-4-methylthiazol-5(2H)-ylidene]ethyl phosphate</name>
        <dbReference type="ChEBI" id="CHEBI:62899"/>
    </ligand>
</feature>
<feature type="binding site" evidence="1">
    <location>
        <begin position="187"/>
        <end position="188"/>
    </location>
    <ligand>
        <name>2-[(2R,5Z)-2-carboxy-4-methylthiazol-5(2H)-ylidene]ethyl phosphate</name>
        <dbReference type="ChEBI" id="CHEBI:62899"/>
    </ligand>
</feature>
<sequence length="214" mass="22083">MTQDFGVYLVTGAEHSAGRSTAEVVEAAIRGGVDIVQLRDKTATARERYEVGTELRTLTRDAGVPLVVNDRLDLAAAIDADGVHLGDDDLPIEVAREQLGSDAIVGRSVSTPDAAREAEQAGADYLGVGAIYGTDSKDTDPEQSNIGLDRIRAVRDATSLPFVGIGGVTPDNAAPVVEAGADGVAVISAITAADDPEHATRRLADAVEGVAPNV</sequence>
<dbReference type="EC" id="2.5.1.3" evidence="1"/>
<dbReference type="EMBL" id="CR936257">
    <property type="protein sequence ID" value="CAI50118.1"/>
    <property type="molecule type" value="Genomic_DNA"/>
</dbReference>
<dbReference type="RefSeq" id="WP_011323734.1">
    <property type="nucleotide sequence ID" value="NC_007426.1"/>
</dbReference>
<dbReference type="SMR" id="Q3IP34"/>
<dbReference type="STRING" id="348780.NP_4054A"/>
<dbReference type="EnsemblBacteria" id="CAI50118">
    <property type="protein sequence ID" value="CAI50118"/>
    <property type="gene ID" value="NP_4054A"/>
</dbReference>
<dbReference type="GeneID" id="3703246"/>
<dbReference type="KEGG" id="nph:NP_4054A"/>
<dbReference type="eggNOG" id="arCOG01089">
    <property type="taxonomic scope" value="Archaea"/>
</dbReference>
<dbReference type="HOGENOM" id="CLU_018272_3_2_2"/>
<dbReference type="OrthoDB" id="85572at2157"/>
<dbReference type="UniPathway" id="UPA00060">
    <property type="reaction ID" value="UER00141"/>
</dbReference>
<dbReference type="Proteomes" id="UP000002698">
    <property type="component" value="Chromosome"/>
</dbReference>
<dbReference type="GO" id="GO:0005737">
    <property type="term" value="C:cytoplasm"/>
    <property type="evidence" value="ECO:0007669"/>
    <property type="project" value="TreeGrafter"/>
</dbReference>
<dbReference type="GO" id="GO:0000287">
    <property type="term" value="F:magnesium ion binding"/>
    <property type="evidence" value="ECO:0007669"/>
    <property type="project" value="UniProtKB-UniRule"/>
</dbReference>
<dbReference type="GO" id="GO:0004789">
    <property type="term" value="F:thiamine-phosphate diphosphorylase activity"/>
    <property type="evidence" value="ECO:0007669"/>
    <property type="project" value="UniProtKB-UniRule"/>
</dbReference>
<dbReference type="GO" id="GO:0009228">
    <property type="term" value="P:thiamine biosynthetic process"/>
    <property type="evidence" value="ECO:0007669"/>
    <property type="project" value="UniProtKB-KW"/>
</dbReference>
<dbReference type="GO" id="GO:0009229">
    <property type="term" value="P:thiamine diphosphate biosynthetic process"/>
    <property type="evidence" value="ECO:0007669"/>
    <property type="project" value="UniProtKB-UniRule"/>
</dbReference>
<dbReference type="CDD" id="cd00564">
    <property type="entry name" value="TMP_TenI"/>
    <property type="match status" value="1"/>
</dbReference>
<dbReference type="FunFam" id="3.20.20.70:FF:000096">
    <property type="entry name" value="Thiamine-phosphate synthase"/>
    <property type="match status" value="1"/>
</dbReference>
<dbReference type="Gene3D" id="3.20.20.70">
    <property type="entry name" value="Aldolase class I"/>
    <property type="match status" value="1"/>
</dbReference>
<dbReference type="HAMAP" id="MF_00097">
    <property type="entry name" value="TMP_synthase"/>
    <property type="match status" value="1"/>
</dbReference>
<dbReference type="InterPro" id="IPR013785">
    <property type="entry name" value="Aldolase_TIM"/>
</dbReference>
<dbReference type="InterPro" id="IPR036206">
    <property type="entry name" value="ThiamineP_synth_sf"/>
</dbReference>
<dbReference type="InterPro" id="IPR022998">
    <property type="entry name" value="ThiamineP_synth_TenI"/>
</dbReference>
<dbReference type="InterPro" id="IPR034291">
    <property type="entry name" value="TMP_synthase"/>
</dbReference>
<dbReference type="NCBIfam" id="TIGR00693">
    <property type="entry name" value="thiE"/>
    <property type="match status" value="1"/>
</dbReference>
<dbReference type="PANTHER" id="PTHR20857">
    <property type="entry name" value="THIAMINE-PHOSPHATE PYROPHOSPHORYLASE"/>
    <property type="match status" value="1"/>
</dbReference>
<dbReference type="PANTHER" id="PTHR20857:SF15">
    <property type="entry name" value="THIAMINE-PHOSPHATE SYNTHASE"/>
    <property type="match status" value="1"/>
</dbReference>
<dbReference type="Pfam" id="PF02581">
    <property type="entry name" value="TMP-TENI"/>
    <property type="match status" value="1"/>
</dbReference>
<dbReference type="SUPFAM" id="SSF51391">
    <property type="entry name" value="Thiamin phosphate synthase"/>
    <property type="match status" value="1"/>
</dbReference>
<organism>
    <name type="scientific">Natronomonas pharaonis (strain ATCC 35678 / DSM 2160 / CIP 103997 / JCM 8858 / NBRC 14720 / NCIMB 2260 / Gabara)</name>
    <name type="common">Halobacterium pharaonis</name>
    <dbReference type="NCBI Taxonomy" id="348780"/>
    <lineage>
        <taxon>Archaea</taxon>
        <taxon>Methanobacteriati</taxon>
        <taxon>Methanobacteriota</taxon>
        <taxon>Stenosarchaea group</taxon>
        <taxon>Halobacteria</taxon>
        <taxon>Halobacteriales</taxon>
        <taxon>Haloarculaceae</taxon>
        <taxon>Natronomonas</taxon>
    </lineage>
</organism>
<keyword id="KW-0460">Magnesium</keyword>
<keyword id="KW-0479">Metal-binding</keyword>
<keyword id="KW-1185">Reference proteome</keyword>
<keyword id="KW-0784">Thiamine biosynthesis</keyword>
<keyword id="KW-0808">Transferase</keyword>
<name>THIE_NATPD</name>
<gene>
    <name evidence="1" type="primary">thiE</name>
    <name type="ordered locus">NP_4054A</name>
</gene>
<evidence type="ECO:0000255" key="1">
    <source>
        <dbReference type="HAMAP-Rule" id="MF_00097"/>
    </source>
</evidence>
<proteinExistence type="inferred from homology"/>
<reference key="1">
    <citation type="journal article" date="2005" name="Genome Res.">
        <title>Living with two extremes: conclusions from the genome sequence of Natronomonas pharaonis.</title>
        <authorList>
            <person name="Falb M."/>
            <person name="Pfeiffer F."/>
            <person name="Palm P."/>
            <person name="Rodewald K."/>
            <person name="Hickmann V."/>
            <person name="Tittor J."/>
            <person name="Oesterhelt D."/>
        </authorList>
    </citation>
    <scope>NUCLEOTIDE SEQUENCE [LARGE SCALE GENOMIC DNA]</scope>
    <source>
        <strain>ATCC 35678 / DSM 2160 / CIP 103997 / JCM 8858 / NBRC 14720 / NCIMB 2260 / Gabara</strain>
    </source>
</reference>
<accession>Q3IP34</accession>
<protein>
    <recommendedName>
        <fullName evidence="1">Thiamine-phosphate synthase</fullName>
        <shortName evidence="1">TP synthase</shortName>
        <shortName evidence="1">TPS</shortName>
        <ecNumber evidence="1">2.5.1.3</ecNumber>
    </recommendedName>
    <alternativeName>
        <fullName evidence="1">Thiamine-phosphate pyrophosphorylase</fullName>
        <shortName evidence="1">TMP pyrophosphorylase</shortName>
        <shortName evidence="1">TMP-PPase</shortName>
    </alternativeName>
</protein>
<comment type="function">
    <text evidence="1">Condenses 4-methyl-5-(beta-hydroxyethyl)thiazole monophosphate (THZ-P) and 2-methyl-4-amino-5-hydroxymethyl pyrimidine pyrophosphate (HMP-PP) to form thiamine monophosphate (TMP).</text>
</comment>
<comment type="catalytic activity">
    <reaction evidence="1">
        <text>2-[(2R,5Z)-2-carboxy-4-methylthiazol-5(2H)-ylidene]ethyl phosphate + 4-amino-2-methyl-5-(diphosphooxymethyl)pyrimidine + 2 H(+) = thiamine phosphate + CO2 + diphosphate</text>
        <dbReference type="Rhea" id="RHEA:47844"/>
        <dbReference type="ChEBI" id="CHEBI:15378"/>
        <dbReference type="ChEBI" id="CHEBI:16526"/>
        <dbReference type="ChEBI" id="CHEBI:33019"/>
        <dbReference type="ChEBI" id="CHEBI:37575"/>
        <dbReference type="ChEBI" id="CHEBI:57841"/>
        <dbReference type="ChEBI" id="CHEBI:62899"/>
        <dbReference type="EC" id="2.5.1.3"/>
    </reaction>
</comment>
<comment type="catalytic activity">
    <reaction evidence="1">
        <text>2-(2-carboxy-4-methylthiazol-5-yl)ethyl phosphate + 4-amino-2-methyl-5-(diphosphooxymethyl)pyrimidine + 2 H(+) = thiamine phosphate + CO2 + diphosphate</text>
        <dbReference type="Rhea" id="RHEA:47848"/>
        <dbReference type="ChEBI" id="CHEBI:15378"/>
        <dbReference type="ChEBI" id="CHEBI:16526"/>
        <dbReference type="ChEBI" id="CHEBI:33019"/>
        <dbReference type="ChEBI" id="CHEBI:37575"/>
        <dbReference type="ChEBI" id="CHEBI:57841"/>
        <dbReference type="ChEBI" id="CHEBI:62890"/>
        <dbReference type="EC" id="2.5.1.3"/>
    </reaction>
</comment>
<comment type="catalytic activity">
    <reaction evidence="1">
        <text>4-methyl-5-(2-phosphooxyethyl)-thiazole + 4-amino-2-methyl-5-(diphosphooxymethyl)pyrimidine + H(+) = thiamine phosphate + diphosphate</text>
        <dbReference type="Rhea" id="RHEA:22328"/>
        <dbReference type="ChEBI" id="CHEBI:15378"/>
        <dbReference type="ChEBI" id="CHEBI:33019"/>
        <dbReference type="ChEBI" id="CHEBI:37575"/>
        <dbReference type="ChEBI" id="CHEBI:57841"/>
        <dbReference type="ChEBI" id="CHEBI:58296"/>
        <dbReference type="EC" id="2.5.1.3"/>
    </reaction>
</comment>
<comment type="cofactor">
    <cofactor evidence="1">
        <name>Mg(2+)</name>
        <dbReference type="ChEBI" id="CHEBI:18420"/>
    </cofactor>
    <text evidence="1">Binds 1 Mg(2+) ion per subunit.</text>
</comment>
<comment type="pathway">
    <text evidence="1">Cofactor biosynthesis; thiamine diphosphate biosynthesis; thiamine phosphate from 4-amino-2-methyl-5-diphosphomethylpyrimidine and 4-methyl-5-(2-phosphoethyl)-thiazole: step 1/1.</text>
</comment>
<comment type="similarity">
    <text evidence="1">Belongs to the thiamine-phosphate synthase family.</text>
</comment>